<sequence length="424" mass="47665">MFLLPRFVLVSCIIGSLGFDNPPTNVVSHLNGDWFLFGDSRSDCNHVVTTNPRNYSYMDLNPALCDSGKISSKAGNSIFRSFHFTDFYNYTGEGQQIIFYEGVNFTPYHAFKCTTSGSNDIWMQNKGLFYTQLYKNMAVYRSLTFVNVPYVYNGSAQSTALCKSGSLVLNNPAYIAREANFGDYYYKVEADFYLSGCDEYIVPLCIFNGKFLSNTKYYDDSQYYFNKDTGVIYGLNSTETITTGFDFNCHYLVLPSGNYLAISNELLLTVPTKAICLNKRKDFTPVQVVDSRWNNAMQSDNMTAVACQPPYCYFRNSTTNYVGVYDINHGDAGFTSILSGLLYDSPCFSQQGVFRYDNVSSVWPLYPYGRCPTAADINTPDVPICVYDPLPIILLGILLGVAVIIIVVLLLYFMVDNGTRLHDA</sequence>
<dbReference type="EC" id="3.1.1.53" evidence="1"/>
<dbReference type="EMBL" id="AF058943">
    <property type="protein sequence ID" value="AAF25508.1"/>
    <property type="molecule type" value="Genomic_RNA"/>
</dbReference>
<dbReference type="SMR" id="Q9QAR6"/>
<dbReference type="GlyCosmos" id="Q9QAR6">
    <property type="glycosylation" value="8 sites, No reported glycans"/>
</dbReference>
<dbReference type="GO" id="GO:0020002">
    <property type="term" value="C:host cell plasma membrane"/>
    <property type="evidence" value="ECO:0007669"/>
    <property type="project" value="UniProtKB-SubCell"/>
</dbReference>
<dbReference type="GO" id="GO:0016020">
    <property type="term" value="C:membrane"/>
    <property type="evidence" value="ECO:0007669"/>
    <property type="project" value="UniProtKB-UniRule"/>
</dbReference>
<dbReference type="GO" id="GO:0019031">
    <property type="term" value="C:viral envelope"/>
    <property type="evidence" value="ECO:0007669"/>
    <property type="project" value="UniProtKB-UniRule"/>
</dbReference>
<dbReference type="GO" id="GO:0055036">
    <property type="term" value="C:virion membrane"/>
    <property type="evidence" value="ECO:0007669"/>
    <property type="project" value="UniProtKB-SubCell"/>
</dbReference>
<dbReference type="GO" id="GO:0046789">
    <property type="term" value="F:host cell surface receptor binding"/>
    <property type="evidence" value="ECO:0007669"/>
    <property type="project" value="UniProtKB-UniRule"/>
</dbReference>
<dbReference type="GO" id="GO:0106331">
    <property type="term" value="F:sialate 4-O-acetylesterase activity"/>
    <property type="evidence" value="ECO:0007669"/>
    <property type="project" value="RHEA"/>
</dbReference>
<dbReference type="GO" id="GO:0106330">
    <property type="term" value="F:sialate 9-O-acetylesterase activity"/>
    <property type="evidence" value="ECO:0007669"/>
    <property type="project" value="RHEA"/>
</dbReference>
<dbReference type="GO" id="GO:0001681">
    <property type="term" value="F:sialate O-acetylesterase activity"/>
    <property type="evidence" value="ECO:0000250"/>
    <property type="project" value="UniProtKB"/>
</dbReference>
<dbReference type="GO" id="GO:0019064">
    <property type="term" value="P:fusion of virus membrane with host plasma membrane"/>
    <property type="evidence" value="ECO:0007669"/>
    <property type="project" value="UniProtKB-UniRule"/>
</dbReference>
<dbReference type="HAMAP" id="MF_04207">
    <property type="entry name" value="BETA_CORONA_HE"/>
    <property type="match status" value="1"/>
</dbReference>
<dbReference type="InterPro" id="IPR008980">
    <property type="entry name" value="Capsid_hemagglutn"/>
</dbReference>
<dbReference type="InterPro" id="IPR042545">
    <property type="entry name" value="HEMA"/>
</dbReference>
<dbReference type="InterPro" id="IPR007142">
    <property type="entry name" value="Hemagglutn-estrase_core"/>
</dbReference>
<dbReference type="InterPro" id="IPR003860">
    <property type="entry name" value="Hemagglutn-estrase_hemagglutn"/>
</dbReference>
<dbReference type="Pfam" id="PF03996">
    <property type="entry name" value="Hema_esterase"/>
    <property type="match status" value="1"/>
</dbReference>
<dbReference type="Pfam" id="PF02710">
    <property type="entry name" value="Hema_HEFG"/>
    <property type="match status" value="1"/>
</dbReference>
<dbReference type="SUPFAM" id="SSF52266">
    <property type="entry name" value="SGNH hydrolase"/>
    <property type="match status" value="1"/>
</dbReference>
<dbReference type="SUPFAM" id="SSF49818">
    <property type="entry name" value="Viral protein domain"/>
    <property type="match status" value="1"/>
</dbReference>
<proteinExistence type="inferred from homology"/>
<gene>
    <name evidence="1" type="primary">HE</name>
    <name type="ORF">2b</name>
</gene>
<keyword id="KW-1015">Disulfide bond</keyword>
<keyword id="KW-0325">Glycoprotein</keyword>
<keyword id="KW-0348">Hemagglutinin</keyword>
<keyword id="KW-1032">Host cell membrane</keyword>
<keyword id="KW-1043">Host membrane</keyword>
<keyword id="KW-0378">Hydrolase</keyword>
<keyword id="KW-0472">Membrane</keyword>
<keyword id="KW-0732">Signal</keyword>
<keyword id="KW-0812">Transmembrane</keyword>
<keyword id="KW-1133">Transmembrane helix</keyword>
<keyword id="KW-0261">Viral envelope protein</keyword>
<keyword id="KW-0946">Virion</keyword>
<reference key="1">
    <citation type="journal article" date="1998" name="Virus Genes">
        <title>Nucleotide and predicted amino acid sequences of all genes encoded by the 3' genomic portion (9.5 kb) of respiratory bovine coronaviruses and comparisons among respiratory and enteric coronaviruses.</title>
        <authorList>
            <person name="Chouljenko V.N."/>
            <person name="Kousoulas K.G."/>
            <person name="Lin X.Q."/>
            <person name="Storz J."/>
        </authorList>
    </citation>
    <scope>NUCLEOTIDE SEQUENCE [GENOMIC RNA]</scope>
    <source>
        <strain>Isolate LSU-94LSS-051-2</strain>
    </source>
</reference>
<organism>
    <name type="scientific">Bovine coronavirus (strain LSU-94LSS-051)</name>
    <name type="common">BCoV-LSU</name>
    <name type="synonym">BCV</name>
    <dbReference type="NCBI Taxonomy" id="233261"/>
    <lineage>
        <taxon>Viruses</taxon>
        <taxon>Riboviria</taxon>
        <taxon>Orthornavirae</taxon>
        <taxon>Pisuviricota</taxon>
        <taxon>Pisoniviricetes</taxon>
        <taxon>Nidovirales</taxon>
        <taxon>Cornidovirineae</taxon>
        <taxon>Coronaviridae</taxon>
        <taxon>Orthocoronavirinae</taxon>
        <taxon>Betacoronavirus</taxon>
        <taxon>Embecovirus</taxon>
        <taxon>Betacoronavirus 1</taxon>
    </lineage>
</organism>
<comment type="function">
    <text evidence="1">Structural protein that makes short spikes at the surface of the virus. Contains receptor binding and receptor-destroying activities. Mediates de-O-acetylation of N-acetyl-4-O-acetylneuraminic acid, which is probably the receptor determinant recognized by the virus on the surface of erythrocytes and susceptible cells. This receptor-destroying activity is important for virus release as it probably helps preventing self-aggregation and ensures the efficient spread of the progeny virus from cell to cell. May serve as a secondary viral attachment protein for initiating infection, the spike protein being the major one. May become a target for both the humoral and the cellular branches of the immune system.</text>
</comment>
<comment type="catalytic activity">
    <reaction evidence="1">
        <text>N-acetyl-9-O-acetylneuraminate + H2O = N-acetylneuraminate + acetate + H(+)</text>
        <dbReference type="Rhea" id="RHEA:22600"/>
        <dbReference type="ChEBI" id="CHEBI:15377"/>
        <dbReference type="ChEBI" id="CHEBI:15378"/>
        <dbReference type="ChEBI" id="CHEBI:28999"/>
        <dbReference type="ChEBI" id="CHEBI:30089"/>
        <dbReference type="ChEBI" id="CHEBI:35418"/>
        <dbReference type="EC" id="3.1.1.53"/>
    </reaction>
</comment>
<comment type="catalytic activity">
    <reaction evidence="1">
        <text>N-acetyl-4-O-acetylneuraminate + H2O = N-acetylneuraminate + acetate + H(+)</text>
        <dbReference type="Rhea" id="RHEA:25564"/>
        <dbReference type="ChEBI" id="CHEBI:15377"/>
        <dbReference type="ChEBI" id="CHEBI:15378"/>
        <dbReference type="ChEBI" id="CHEBI:29006"/>
        <dbReference type="ChEBI" id="CHEBI:30089"/>
        <dbReference type="ChEBI" id="CHEBI:35418"/>
        <dbReference type="EC" id="3.1.1.53"/>
    </reaction>
</comment>
<comment type="subunit">
    <text evidence="1">Homodimer; disulfide-linked. Forms a complex with the M protein in the pre-Golgi. Associates then with S-M complex to form a ternary complex S-M-HE.</text>
</comment>
<comment type="subcellular location">
    <subcellularLocation>
        <location evidence="1">Virion membrane</location>
        <topology evidence="1">Single-pass type I membrane protein</topology>
    </subcellularLocation>
    <subcellularLocation>
        <location evidence="1">Host cell membrane</location>
        <topology evidence="1">Single-pass type I membrane protein</topology>
    </subcellularLocation>
    <text evidence="1">In infected cells becomes incorporated into the envelope of virions during virus assembly at the endoplasmic reticulum and cis Golgi. However, some may escape incorporation into virions and subsequently migrate to the cell surface.</text>
</comment>
<comment type="PTM">
    <text evidence="1">N-glycosylated in the host RER.</text>
</comment>
<comment type="similarity">
    <text evidence="1">Belongs to the influenza type C/coronaviruses hemagglutinin-esterase family.</text>
</comment>
<organismHost>
    <name type="scientific">Bos taurus</name>
    <name type="common">Bovine</name>
    <dbReference type="NCBI Taxonomy" id="9913"/>
</organismHost>
<name>HEMA_CVBLS</name>
<protein>
    <recommendedName>
        <fullName evidence="1">Hemagglutinin-esterase</fullName>
        <shortName evidence="1">HE protein</shortName>
        <ecNumber evidence="1">3.1.1.53</ecNumber>
    </recommendedName>
    <alternativeName>
        <fullName evidence="1">E3 glycoprotein</fullName>
    </alternativeName>
</protein>
<feature type="signal peptide" evidence="1">
    <location>
        <begin position="1"/>
        <end position="16"/>
    </location>
</feature>
<feature type="chain" id="PRO_0000037136" description="Hemagglutinin-esterase" evidence="1">
    <location>
        <begin position="17"/>
        <end position="424"/>
    </location>
</feature>
<feature type="topological domain" description="Virion surface" evidence="1">
    <location>
        <begin position="17"/>
        <end position="392"/>
    </location>
</feature>
<feature type="transmembrane region" description="Helical" evidence="1">
    <location>
        <begin position="393"/>
        <end position="413"/>
    </location>
</feature>
<feature type="topological domain" description="Intravirion" evidence="1">
    <location>
        <begin position="414"/>
        <end position="424"/>
    </location>
</feature>
<feature type="region of interest" description="Esterase domain 1" evidence="1">
    <location>
        <begin position="7"/>
        <end position="127"/>
    </location>
</feature>
<feature type="region of interest" description="Receptor binding" evidence="1">
    <location>
        <begin position="128"/>
        <end position="266"/>
    </location>
</feature>
<feature type="region of interest" description="Esterase domain 2" evidence="1">
    <location>
        <begin position="267"/>
        <end position="379"/>
    </location>
</feature>
<feature type="active site" description="Nucleophile" evidence="1">
    <location>
        <position position="40"/>
    </location>
</feature>
<feature type="active site" description="Charge relay system" evidence="1">
    <location>
        <position position="326"/>
    </location>
</feature>
<feature type="active site" description="Charge relay system" evidence="1">
    <location>
        <position position="329"/>
    </location>
</feature>
<feature type="glycosylation site" description="N-linked (GlcNAc...) asparagine; by host" evidence="1">
    <location>
        <position position="54"/>
    </location>
</feature>
<feature type="glycosylation site" description="N-linked (GlcNAc...) asparagine; by host" evidence="1">
    <location>
        <position position="89"/>
    </location>
</feature>
<feature type="glycosylation site" description="N-linked (GlcNAc...) asparagine; by host" evidence="1">
    <location>
        <position position="153"/>
    </location>
</feature>
<feature type="glycosylation site" description="N-linked (GlcNAc...) asparagine; by host" evidence="1">
    <location>
        <position position="236"/>
    </location>
</feature>
<feature type="glycosylation site" description="N-linked (GlcNAc...) asparagine; by host" evidence="1">
    <location>
        <position position="301"/>
    </location>
</feature>
<feature type="glycosylation site" description="N-linked (GlcNAc...) asparagine; by host" evidence="1">
    <location>
        <position position="316"/>
    </location>
</feature>
<feature type="glycosylation site" description="N-linked (GlcNAc...) asparagine; by host" evidence="1">
    <location>
        <position position="358"/>
    </location>
</feature>
<feature type="glycosylation site" description="N-linked (GlcNAc...) asparagine; by host" evidence="1">
    <location>
        <position position="417"/>
    </location>
</feature>
<feature type="disulfide bond" evidence="1">
    <location>
        <begin position="44"/>
        <end position="65"/>
    </location>
</feature>
<feature type="disulfide bond" evidence="1">
    <location>
        <begin position="113"/>
        <end position="162"/>
    </location>
</feature>
<feature type="disulfide bond" evidence="1">
    <location>
        <begin position="197"/>
        <end position="276"/>
    </location>
</feature>
<feature type="disulfide bond" evidence="1">
    <location>
        <begin position="205"/>
        <end position="249"/>
    </location>
</feature>
<feature type="disulfide bond" evidence="1">
    <location>
        <begin position="307"/>
        <end position="312"/>
    </location>
</feature>
<feature type="disulfide bond" evidence="1">
    <location>
        <begin position="347"/>
        <end position="371"/>
    </location>
</feature>
<evidence type="ECO:0000255" key="1">
    <source>
        <dbReference type="HAMAP-Rule" id="MF_04207"/>
    </source>
</evidence>
<accession>Q9QAR6</accession>